<name>QCR7_DICDI</name>
<gene>
    <name type="ORF">DDB_G0286171</name>
</gene>
<keyword id="KW-0249">Electron transport</keyword>
<keyword id="KW-0472">Membrane</keyword>
<keyword id="KW-0496">Mitochondrion</keyword>
<keyword id="KW-0999">Mitochondrion inner membrane</keyword>
<keyword id="KW-1185">Reference proteome</keyword>
<keyword id="KW-0679">Respiratory chain</keyword>
<keyword id="KW-0813">Transport</keyword>
<sequence length="109" mass="13274">MSILKLLPQSFVSSLQKSSWVEYRKMGLYFADLYNNTEANQEVYRRLPFDVLVQRDRRLRVAIDLSLKKQLLPESEWSDNQKDFEFTEMIEKYTEQVERENDLRRSFRE</sequence>
<accession>Q54M82</accession>
<reference key="1">
    <citation type="journal article" date="2005" name="Nature">
        <title>The genome of the social amoeba Dictyostelium discoideum.</title>
        <authorList>
            <person name="Eichinger L."/>
            <person name="Pachebat J.A."/>
            <person name="Gloeckner G."/>
            <person name="Rajandream M.A."/>
            <person name="Sucgang R."/>
            <person name="Berriman M."/>
            <person name="Song J."/>
            <person name="Olsen R."/>
            <person name="Szafranski K."/>
            <person name="Xu Q."/>
            <person name="Tunggal B."/>
            <person name="Kummerfeld S."/>
            <person name="Madera M."/>
            <person name="Konfortov B.A."/>
            <person name="Rivero F."/>
            <person name="Bankier A.T."/>
            <person name="Lehmann R."/>
            <person name="Hamlin N."/>
            <person name="Davies R."/>
            <person name="Gaudet P."/>
            <person name="Fey P."/>
            <person name="Pilcher K."/>
            <person name="Chen G."/>
            <person name="Saunders D."/>
            <person name="Sodergren E.J."/>
            <person name="Davis P."/>
            <person name="Kerhornou A."/>
            <person name="Nie X."/>
            <person name="Hall N."/>
            <person name="Anjard C."/>
            <person name="Hemphill L."/>
            <person name="Bason N."/>
            <person name="Farbrother P."/>
            <person name="Desany B."/>
            <person name="Just E."/>
            <person name="Morio T."/>
            <person name="Rost R."/>
            <person name="Churcher C.M."/>
            <person name="Cooper J."/>
            <person name="Haydock S."/>
            <person name="van Driessche N."/>
            <person name="Cronin A."/>
            <person name="Goodhead I."/>
            <person name="Muzny D.M."/>
            <person name="Mourier T."/>
            <person name="Pain A."/>
            <person name="Lu M."/>
            <person name="Harper D."/>
            <person name="Lindsay R."/>
            <person name="Hauser H."/>
            <person name="James K.D."/>
            <person name="Quiles M."/>
            <person name="Madan Babu M."/>
            <person name="Saito T."/>
            <person name="Buchrieser C."/>
            <person name="Wardroper A."/>
            <person name="Felder M."/>
            <person name="Thangavelu M."/>
            <person name="Johnson D."/>
            <person name="Knights A."/>
            <person name="Loulseged H."/>
            <person name="Mungall K.L."/>
            <person name="Oliver K."/>
            <person name="Price C."/>
            <person name="Quail M.A."/>
            <person name="Urushihara H."/>
            <person name="Hernandez J."/>
            <person name="Rabbinowitsch E."/>
            <person name="Steffen D."/>
            <person name="Sanders M."/>
            <person name="Ma J."/>
            <person name="Kohara Y."/>
            <person name="Sharp S."/>
            <person name="Simmonds M.N."/>
            <person name="Spiegler S."/>
            <person name="Tivey A."/>
            <person name="Sugano S."/>
            <person name="White B."/>
            <person name="Walker D."/>
            <person name="Woodward J.R."/>
            <person name="Winckler T."/>
            <person name="Tanaka Y."/>
            <person name="Shaulsky G."/>
            <person name="Schleicher M."/>
            <person name="Weinstock G.M."/>
            <person name="Rosenthal A."/>
            <person name="Cox E.C."/>
            <person name="Chisholm R.L."/>
            <person name="Gibbs R.A."/>
            <person name="Loomis W.F."/>
            <person name="Platzer M."/>
            <person name="Kay R.R."/>
            <person name="Williams J.G."/>
            <person name="Dear P.H."/>
            <person name="Noegel A.A."/>
            <person name="Barrell B.G."/>
            <person name="Kuspa A."/>
        </authorList>
    </citation>
    <scope>NUCLEOTIDE SEQUENCE [LARGE SCALE GENOMIC DNA]</scope>
    <source>
        <strain>AX4</strain>
    </source>
</reference>
<reference key="2">
    <citation type="journal article" date="2004" name="Nucleic Acids Res.">
        <title>Analyses of cDNAs from growth and slug stages of Dictyostelium discoideum.</title>
        <authorList>
            <person name="Urushihara H."/>
            <person name="Morio T."/>
            <person name="Saito T."/>
            <person name="Kohara Y."/>
            <person name="Koriki E."/>
            <person name="Ochiai H."/>
            <person name="Maeda M."/>
            <person name="Williams J.G."/>
            <person name="Takeuchi I."/>
            <person name="Tanaka Y."/>
        </authorList>
    </citation>
    <scope>NUCLEOTIDE SEQUENCE [LARGE SCALE MRNA]</scope>
    <source>
        <strain>AX4</strain>
    </source>
</reference>
<feature type="chain" id="PRO_0000330320" description="Probable cytochrome b-c1 complex subunit 7">
    <location>
        <begin position="1"/>
        <end position="109"/>
    </location>
</feature>
<protein>
    <recommendedName>
        <fullName>Probable cytochrome b-c1 complex subunit 7</fullName>
    </recommendedName>
    <alternativeName>
        <fullName>Ubiquinol-cytochrome c reductase complex subunit 7</fullName>
    </alternativeName>
</protein>
<comment type="function">
    <text evidence="1">Component of the ubiquinol-cytochrome c oxidoreductase, a multisubunit transmembrane complex that is part of the mitochondrial electron transport chain which drives oxidative phosphorylation. The respiratory chain contains 3 multisubunit complexes succinate dehydrogenase (complex II, CII), ubiquinol-cytochrome c oxidoreductase (cytochrome b-c1 complex, complex III, CIII) and cytochrome c oxidase (complex IV, CIV), that cooperate to transfer electrons derived from NADH and succinate to molecular oxygen, creating an electrochemical gradient over the inner membrane that drives transmembrane transport and the ATP synthase. The cytochrome b-c1 complex catalyzes electron transfer from ubiquinol to cytochrome c, linking this redox reaction to translocation of protons across the mitochondrial inner membrane, with protons being carried across the membrane as hydrogens on the quinol. In the process called Q cycle, 2 protons are consumed from the matrix, 4 protons are released into the intermembrane space and 2 electrons are passed to cytochrome c.</text>
</comment>
<comment type="subunit">
    <text evidence="1">Component of the ubiquinol-cytochrome c oxidoreductase (cytochrome b-c1 complex, complex III, CIII), a multisubunit enzyme composed of 3 respiratory subunits cytochrome b, cytochrome c1 and Rieske protein, 2 core protein subunits, and additional low-molecular weight protein subunits. The complex exists as an obligatory dimer and forms supercomplexes (SCs) in the inner mitochondrial membrane with cytochrome c oxidase (complex IV, CIV).</text>
</comment>
<comment type="subcellular location">
    <subcellularLocation>
        <location evidence="1">Mitochondrion inner membrane</location>
        <topology evidence="1">Peripheral membrane protein</topology>
        <orientation evidence="1">Matrix side</orientation>
    </subcellularLocation>
</comment>
<comment type="similarity">
    <text evidence="2">Belongs to the UQCRB/QCR7 family.</text>
</comment>
<organism>
    <name type="scientific">Dictyostelium discoideum</name>
    <name type="common">Social amoeba</name>
    <dbReference type="NCBI Taxonomy" id="44689"/>
    <lineage>
        <taxon>Eukaryota</taxon>
        <taxon>Amoebozoa</taxon>
        <taxon>Evosea</taxon>
        <taxon>Eumycetozoa</taxon>
        <taxon>Dictyostelia</taxon>
        <taxon>Dictyosteliales</taxon>
        <taxon>Dictyosteliaceae</taxon>
        <taxon>Dictyostelium</taxon>
    </lineage>
</organism>
<dbReference type="EMBL" id="AAFI02000085">
    <property type="protein sequence ID" value="EAL64378.1"/>
    <property type="molecule type" value="Genomic_DNA"/>
</dbReference>
<dbReference type="EMBL" id="AU261829">
    <property type="status" value="NOT_ANNOTATED_CDS"/>
    <property type="molecule type" value="mRNA"/>
</dbReference>
<dbReference type="SMR" id="Q54M82"/>
<dbReference type="FunCoup" id="Q54M82">
    <property type="interactions" value="36"/>
</dbReference>
<dbReference type="STRING" id="44689.Q54M82"/>
<dbReference type="PaxDb" id="44689-DDB0267110"/>
<dbReference type="EnsemblProtists" id="EAL64378">
    <property type="protein sequence ID" value="EAL64378"/>
    <property type="gene ID" value="DDB_G0286171"/>
</dbReference>
<dbReference type="KEGG" id="ddi:DDB_G0286171"/>
<dbReference type="dictyBase" id="DDB_G0286171">
    <property type="gene designation" value="uqcrb"/>
</dbReference>
<dbReference type="VEuPathDB" id="AmoebaDB:DDB_G0286171"/>
<dbReference type="eggNOG" id="ENOG502RI1R">
    <property type="taxonomic scope" value="Eukaryota"/>
</dbReference>
<dbReference type="HOGENOM" id="CLU_2188923_0_0_1"/>
<dbReference type="InParanoid" id="Q54M82"/>
<dbReference type="OMA" id="KSSWVEY"/>
<dbReference type="PhylomeDB" id="Q54M82"/>
<dbReference type="Reactome" id="R-DDI-611105">
    <property type="pathway name" value="Respiratory electron transport"/>
</dbReference>
<dbReference type="PRO" id="PR:Q54M82"/>
<dbReference type="Proteomes" id="UP000002195">
    <property type="component" value="Chromosome 4"/>
</dbReference>
<dbReference type="GO" id="GO:0005743">
    <property type="term" value="C:mitochondrial inner membrane"/>
    <property type="evidence" value="ECO:0007669"/>
    <property type="project" value="UniProtKB-SubCell"/>
</dbReference>
<dbReference type="GO" id="GO:0045275">
    <property type="term" value="C:respiratory chain complex III"/>
    <property type="evidence" value="ECO:0000318"/>
    <property type="project" value="GO_Central"/>
</dbReference>
<dbReference type="GO" id="GO:0006122">
    <property type="term" value="P:mitochondrial electron transport, ubiquinol to cytochrome c"/>
    <property type="evidence" value="ECO:0000318"/>
    <property type="project" value="GO_Central"/>
</dbReference>
<dbReference type="FunFam" id="1.10.1090.10:FF:000004">
    <property type="entry name" value="Probable cytochrome b-c1 complex subunit 7"/>
    <property type="match status" value="1"/>
</dbReference>
<dbReference type="Gene3D" id="1.10.1090.10">
    <property type="entry name" value="Cytochrome b-c1 complex subunit 7"/>
    <property type="match status" value="1"/>
</dbReference>
<dbReference type="InterPro" id="IPR003197">
    <property type="entry name" value="QCR7"/>
</dbReference>
<dbReference type="InterPro" id="IPR036544">
    <property type="entry name" value="QCR7_sf"/>
</dbReference>
<dbReference type="PANTHER" id="PTHR12022:SF0">
    <property type="entry name" value="CYTOCHROME B-C1 COMPLEX SUBUNIT 7"/>
    <property type="match status" value="1"/>
</dbReference>
<dbReference type="PANTHER" id="PTHR12022">
    <property type="entry name" value="UBIQUINOL-CYTOCHROME C REDUCTASE COMPLEX 14 KD PROTEIN"/>
    <property type="match status" value="1"/>
</dbReference>
<dbReference type="Pfam" id="PF02271">
    <property type="entry name" value="UCR_14kD"/>
    <property type="match status" value="1"/>
</dbReference>
<dbReference type="SUPFAM" id="SSF81524">
    <property type="entry name" value="14 kDa protein of cytochrome bc1 complex (Ubiquinol-cytochrome c reductase)"/>
    <property type="match status" value="1"/>
</dbReference>
<proteinExistence type="inferred from homology"/>
<evidence type="ECO:0000250" key="1">
    <source>
        <dbReference type="UniProtKB" id="P00128"/>
    </source>
</evidence>
<evidence type="ECO:0000305" key="2"/>